<organism>
    <name type="scientific">Bacteroides thetaiotaomicron (strain ATCC 29148 / DSM 2079 / JCM 5827 / CCUG 10774 / NCTC 10582 / VPI-5482 / E50)</name>
    <dbReference type="NCBI Taxonomy" id="226186"/>
    <lineage>
        <taxon>Bacteria</taxon>
        <taxon>Pseudomonadati</taxon>
        <taxon>Bacteroidota</taxon>
        <taxon>Bacteroidia</taxon>
        <taxon>Bacteroidales</taxon>
        <taxon>Bacteroidaceae</taxon>
        <taxon>Bacteroides</taxon>
    </lineage>
</organism>
<comment type="function">
    <text evidence="1">Catalyzes the dephosphorylation of undecaprenyl diphosphate (UPP). Confers resistance to bacitracin.</text>
</comment>
<comment type="catalytic activity">
    <reaction evidence="1">
        <text>di-trans,octa-cis-undecaprenyl diphosphate + H2O = di-trans,octa-cis-undecaprenyl phosphate + phosphate + H(+)</text>
        <dbReference type="Rhea" id="RHEA:28094"/>
        <dbReference type="ChEBI" id="CHEBI:15377"/>
        <dbReference type="ChEBI" id="CHEBI:15378"/>
        <dbReference type="ChEBI" id="CHEBI:43474"/>
        <dbReference type="ChEBI" id="CHEBI:58405"/>
        <dbReference type="ChEBI" id="CHEBI:60392"/>
        <dbReference type="EC" id="3.6.1.27"/>
    </reaction>
</comment>
<comment type="subcellular location">
    <subcellularLocation>
        <location evidence="1">Cell inner membrane</location>
        <topology evidence="1">Multi-pass membrane protein</topology>
    </subcellularLocation>
</comment>
<comment type="miscellaneous">
    <text>Bacitracin is thought to be involved in the inhibition of peptidoglycan synthesis by sequestering undecaprenyl diphosphate, thereby reducing the pool of lipid carrier available.</text>
</comment>
<comment type="similarity">
    <text evidence="1">Belongs to the UppP family.</text>
</comment>
<name>UPPP_BACTN</name>
<keyword id="KW-0046">Antibiotic resistance</keyword>
<keyword id="KW-0997">Cell inner membrane</keyword>
<keyword id="KW-1003">Cell membrane</keyword>
<keyword id="KW-0133">Cell shape</keyword>
<keyword id="KW-0961">Cell wall biogenesis/degradation</keyword>
<keyword id="KW-0378">Hydrolase</keyword>
<keyword id="KW-0472">Membrane</keyword>
<keyword id="KW-0573">Peptidoglycan synthesis</keyword>
<keyword id="KW-1185">Reference proteome</keyword>
<keyword id="KW-0812">Transmembrane</keyword>
<keyword id="KW-1133">Transmembrane helix</keyword>
<proteinExistence type="inferred from homology"/>
<evidence type="ECO:0000255" key="1">
    <source>
        <dbReference type="HAMAP-Rule" id="MF_01006"/>
    </source>
</evidence>
<dbReference type="EC" id="3.6.1.27" evidence="1"/>
<dbReference type="EMBL" id="AE015928">
    <property type="protein sequence ID" value="AAO78318.1"/>
    <property type="molecule type" value="Genomic_DNA"/>
</dbReference>
<dbReference type="RefSeq" id="NP_812124.1">
    <property type="nucleotide sequence ID" value="NC_004663.1"/>
</dbReference>
<dbReference type="RefSeq" id="WP_008767449.1">
    <property type="nucleotide sequence ID" value="NC_004663.1"/>
</dbReference>
<dbReference type="SMR" id="Q8A2U3"/>
<dbReference type="FunCoup" id="Q8A2U3">
    <property type="interactions" value="315"/>
</dbReference>
<dbReference type="STRING" id="226186.BT_3212"/>
<dbReference type="PaxDb" id="226186-BT_3212"/>
<dbReference type="EnsemblBacteria" id="AAO78318">
    <property type="protein sequence ID" value="AAO78318"/>
    <property type="gene ID" value="BT_3212"/>
</dbReference>
<dbReference type="GeneID" id="60924391"/>
<dbReference type="KEGG" id="bth:BT_3212"/>
<dbReference type="PATRIC" id="fig|226186.12.peg.3275"/>
<dbReference type="eggNOG" id="COG1968">
    <property type="taxonomic scope" value="Bacteria"/>
</dbReference>
<dbReference type="HOGENOM" id="CLU_060296_1_2_10"/>
<dbReference type="InParanoid" id="Q8A2U3"/>
<dbReference type="OrthoDB" id="9808289at2"/>
<dbReference type="Proteomes" id="UP000001414">
    <property type="component" value="Chromosome"/>
</dbReference>
<dbReference type="GO" id="GO:0005886">
    <property type="term" value="C:plasma membrane"/>
    <property type="evidence" value="ECO:0000318"/>
    <property type="project" value="GO_Central"/>
</dbReference>
<dbReference type="GO" id="GO:0050380">
    <property type="term" value="F:undecaprenyl-diphosphatase activity"/>
    <property type="evidence" value="ECO:0000318"/>
    <property type="project" value="GO_Central"/>
</dbReference>
<dbReference type="GO" id="GO:0071555">
    <property type="term" value="P:cell wall organization"/>
    <property type="evidence" value="ECO:0007669"/>
    <property type="project" value="UniProtKB-KW"/>
</dbReference>
<dbReference type="GO" id="GO:0009252">
    <property type="term" value="P:peptidoglycan biosynthetic process"/>
    <property type="evidence" value="ECO:0007669"/>
    <property type="project" value="UniProtKB-KW"/>
</dbReference>
<dbReference type="GO" id="GO:0000270">
    <property type="term" value="P:peptidoglycan metabolic process"/>
    <property type="evidence" value="ECO:0000318"/>
    <property type="project" value="GO_Central"/>
</dbReference>
<dbReference type="GO" id="GO:0008360">
    <property type="term" value="P:regulation of cell shape"/>
    <property type="evidence" value="ECO:0007669"/>
    <property type="project" value="UniProtKB-KW"/>
</dbReference>
<dbReference type="GO" id="GO:0046677">
    <property type="term" value="P:response to antibiotic"/>
    <property type="evidence" value="ECO:0007669"/>
    <property type="project" value="UniProtKB-UniRule"/>
</dbReference>
<dbReference type="HAMAP" id="MF_01006">
    <property type="entry name" value="Undec_diphosphatase"/>
    <property type="match status" value="1"/>
</dbReference>
<dbReference type="InterPro" id="IPR003824">
    <property type="entry name" value="UppP"/>
</dbReference>
<dbReference type="PANTHER" id="PTHR30622">
    <property type="entry name" value="UNDECAPRENYL-DIPHOSPHATASE"/>
    <property type="match status" value="1"/>
</dbReference>
<dbReference type="PANTHER" id="PTHR30622:SF2">
    <property type="entry name" value="UNDECAPRENYL-DIPHOSPHATASE"/>
    <property type="match status" value="1"/>
</dbReference>
<dbReference type="Pfam" id="PF02673">
    <property type="entry name" value="BacA"/>
    <property type="match status" value="1"/>
</dbReference>
<sequence length="264" mass="28563">MSWLEAMILGLIQGLTEYLPVSSSGHLAIGSALFGIQGEENLAFTIVVHVATVCSTLVILWKEIDWIFKGLFKFQMNDETRYVINIVISMIPIGIVGVFFKDYVEAIFGSGLMIVGCMLLLTAALLSFSYYYKPRQKDKISMKDAFIIGLAQACAVLPGLSRSGSTIATGLLLGDNKAKLAQFSFLMVIPPILGEALLDSVKMMKGEDVVGDIPALSLIVGFLAAFVAGCLACKWMINIVKKGKLIYFAIYCAIAGLAVIITQL</sequence>
<reference key="1">
    <citation type="journal article" date="2003" name="Science">
        <title>A genomic view of the human-Bacteroides thetaiotaomicron symbiosis.</title>
        <authorList>
            <person name="Xu J."/>
            <person name="Bjursell M.K."/>
            <person name="Himrod J."/>
            <person name="Deng S."/>
            <person name="Carmichael L.K."/>
            <person name="Chiang H.C."/>
            <person name="Hooper L.V."/>
            <person name="Gordon J.I."/>
        </authorList>
    </citation>
    <scope>NUCLEOTIDE SEQUENCE [LARGE SCALE GENOMIC DNA]</scope>
    <source>
        <strain>ATCC 29148 / DSM 2079 / JCM 5827 / CCUG 10774 / NCTC 10582 / VPI-5482 / E50</strain>
    </source>
</reference>
<feature type="chain" id="PRO_0000151110" description="Undecaprenyl-diphosphatase">
    <location>
        <begin position="1"/>
        <end position="264"/>
    </location>
</feature>
<feature type="transmembrane region" description="Helical" evidence="1">
    <location>
        <begin position="41"/>
        <end position="61"/>
    </location>
</feature>
<feature type="transmembrane region" description="Helical" evidence="1">
    <location>
        <begin position="82"/>
        <end position="102"/>
    </location>
</feature>
<feature type="transmembrane region" description="Helical" evidence="1">
    <location>
        <begin position="106"/>
        <end position="126"/>
    </location>
</feature>
<feature type="transmembrane region" description="Helical" evidence="1">
    <location>
        <begin position="140"/>
        <end position="160"/>
    </location>
</feature>
<feature type="transmembrane region" description="Helical" evidence="1">
    <location>
        <begin position="213"/>
        <end position="233"/>
    </location>
</feature>
<feature type="transmembrane region" description="Helical" evidence="1">
    <location>
        <begin position="244"/>
        <end position="264"/>
    </location>
</feature>
<accession>Q8A2U3</accession>
<gene>
    <name evidence="1" type="primary">uppP</name>
    <name type="synonym">bacA</name>
    <name type="synonym">upk</name>
    <name type="ordered locus">BT_3212</name>
</gene>
<protein>
    <recommendedName>
        <fullName evidence="1">Undecaprenyl-diphosphatase</fullName>
        <ecNumber evidence="1">3.6.1.27</ecNumber>
    </recommendedName>
    <alternativeName>
        <fullName evidence="1">Bacitracin resistance protein</fullName>
    </alternativeName>
    <alternativeName>
        <fullName evidence="1">Undecaprenyl pyrophosphate phosphatase</fullName>
    </alternativeName>
</protein>